<accession>Q7N3P6</accession>
<comment type="function">
    <text evidence="1">Catalyzes the attachment of threonine to tRNA(Thr) in a two-step reaction: L-threonine is first activated by ATP to form Thr-AMP and then transferred to the acceptor end of tRNA(Thr). Also edits incorrectly charged L-seryl-tRNA(Thr).</text>
</comment>
<comment type="catalytic activity">
    <reaction evidence="1">
        <text>tRNA(Thr) + L-threonine + ATP = L-threonyl-tRNA(Thr) + AMP + diphosphate + H(+)</text>
        <dbReference type="Rhea" id="RHEA:24624"/>
        <dbReference type="Rhea" id="RHEA-COMP:9670"/>
        <dbReference type="Rhea" id="RHEA-COMP:9704"/>
        <dbReference type="ChEBI" id="CHEBI:15378"/>
        <dbReference type="ChEBI" id="CHEBI:30616"/>
        <dbReference type="ChEBI" id="CHEBI:33019"/>
        <dbReference type="ChEBI" id="CHEBI:57926"/>
        <dbReference type="ChEBI" id="CHEBI:78442"/>
        <dbReference type="ChEBI" id="CHEBI:78534"/>
        <dbReference type="ChEBI" id="CHEBI:456215"/>
        <dbReference type="EC" id="6.1.1.3"/>
    </reaction>
</comment>
<comment type="cofactor">
    <cofactor evidence="1">
        <name>Zn(2+)</name>
        <dbReference type="ChEBI" id="CHEBI:29105"/>
    </cofactor>
    <text evidence="1">Binds 1 zinc ion per subunit.</text>
</comment>
<comment type="subunit">
    <text evidence="1">Homodimer.</text>
</comment>
<comment type="subcellular location">
    <subcellularLocation>
        <location evidence="1">Cytoplasm</location>
    </subcellularLocation>
</comment>
<comment type="similarity">
    <text evidence="1">Belongs to the class-II aminoacyl-tRNA synthetase family.</text>
</comment>
<name>SYT_PHOLL</name>
<reference key="1">
    <citation type="journal article" date="2003" name="Nat. Biotechnol.">
        <title>The genome sequence of the entomopathogenic bacterium Photorhabdus luminescens.</title>
        <authorList>
            <person name="Duchaud E."/>
            <person name="Rusniok C."/>
            <person name="Frangeul L."/>
            <person name="Buchrieser C."/>
            <person name="Givaudan A."/>
            <person name="Taourit S."/>
            <person name="Bocs S."/>
            <person name="Boursaux-Eude C."/>
            <person name="Chandler M."/>
            <person name="Charles J.-F."/>
            <person name="Dassa E."/>
            <person name="Derose R."/>
            <person name="Derzelle S."/>
            <person name="Freyssinet G."/>
            <person name="Gaudriault S."/>
            <person name="Medigue C."/>
            <person name="Lanois A."/>
            <person name="Powell K."/>
            <person name="Siguier P."/>
            <person name="Vincent R."/>
            <person name="Wingate V."/>
            <person name="Zouine M."/>
            <person name="Glaser P."/>
            <person name="Boemare N."/>
            <person name="Danchin A."/>
            <person name="Kunst F."/>
        </authorList>
    </citation>
    <scope>NUCLEOTIDE SEQUENCE [LARGE SCALE GENOMIC DNA]</scope>
    <source>
        <strain>DSM 15139 / CIP 105565 / TT01</strain>
    </source>
</reference>
<keyword id="KW-0030">Aminoacyl-tRNA synthetase</keyword>
<keyword id="KW-0067">ATP-binding</keyword>
<keyword id="KW-0963">Cytoplasm</keyword>
<keyword id="KW-0436">Ligase</keyword>
<keyword id="KW-0479">Metal-binding</keyword>
<keyword id="KW-0547">Nucleotide-binding</keyword>
<keyword id="KW-0648">Protein biosynthesis</keyword>
<keyword id="KW-1185">Reference proteome</keyword>
<keyword id="KW-0694">RNA-binding</keyword>
<keyword id="KW-0820">tRNA-binding</keyword>
<keyword id="KW-0862">Zinc</keyword>
<feature type="chain" id="PRO_0000101021" description="Threonine--tRNA ligase">
    <location>
        <begin position="1"/>
        <end position="642"/>
    </location>
</feature>
<feature type="domain" description="TGS" evidence="2">
    <location>
        <begin position="1"/>
        <end position="61"/>
    </location>
</feature>
<feature type="region of interest" description="Catalytic" evidence="1">
    <location>
        <begin position="243"/>
        <end position="534"/>
    </location>
</feature>
<feature type="binding site" evidence="1">
    <location>
        <position position="334"/>
    </location>
    <ligand>
        <name>Zn(2+)</name>
        <dbReference type="ChEBI" id="CHEBI:29105"/>
    </ligand>
</feature>
<feature type="binding site" evidence="1">
    <location>
        <position position="385"/>
    </location>
    <ligand>
        <name>Zn(2+)</name>
        <dbReference type="ChEBI" id="CHEBI:29105"/>
    </ligand>
</feature>
<feature type="binding site" evidence="1">
    <location>
        <position position="511"/>
    </location>
    <ligand>
        <name>Zn(2+)</name>
        <dbReference type="ChEBI" id="CHEBI:29105"/>
    </ligand>
</feature>
<gene>
    <name evidence="1" type="primary">thrS</name>
    <name type="ordered locus">plu2669</name>
</gene>
<organism>
    <name type="scientific">Photorhabdus laumondii subsp. laumondii (strain DSM 15139 / CIP 105565 / TT01)</name>
    <name type="common">Photorhabdus luminescens subsp. laumondii</name>
    <dbReference type="NCBI Taxonomy" id="243265"/>
    <lineage>
        <taxon>Bacteria</taxon>
        <taxon>Pseudomonadati</taxon>
        <taxon>Pseudomonadota</taxon>
        <taxon>Gammaproteobacteria</taxon>
        <taxon>Enterobacterales</taxon>
        <taxon>Morganellaceae</taxon>
        <taxon>Photorhabdus</taxon>
    </lineage>
</organism>
<sequence length="642" mass="73871">MPVVTLPDGSQRQFDHAVSVMDVACDIGPGLAKACIAGRVNGELVDACELIDSDANLAIITSKDDAGLEIIRHSCAHLLGHAIKQLWPDTKMAIGPIIDNGFYYDVDLGRALTQEDIELLEKRMLELAKKDYDVIKKKVNWQEARDTFVARGEDYKVQILDENISRDDRPGLYNHEEYIDMCRGPHVPNMRFCHHFKLQKVAGAYWRGDSNNKMLQRIYGTAWADKKQLNTYLQRLEEAAKRDHRKIGKQLDLYHMQEEAPGMAFWHNDGWTIFRELETFVRTKLKEYQYQEVKGPFMMDRVMWERTGHWENYGEHMFTTSSENREYCVKPMNCPGHIQIFNQGLKSYRDLPLRMAEFGSCHRNEPSGALHGLMRVRGFTQDDAHIFCTEEQIHREVSSCIKMVYDVYSTFGFEKIVVKLSTRPEKRIGTEEQWNQAEESLAAALQENGVQFEYQPGEGAFYGPKIEFTLHDCLDRAWQCGTVQLDFSLPGRLSASYVGENNERKVPVMIHRAVLGSLERFIGILTEEYAGFFPTWIAPQQVVVMNITDSQADYVQELVKKLQDAGIRAKADLRNEKIGFKIREHTLRRVPYMLVCGEKEVESGKVSVRTRRGKDLGSIDVNGFIEKLLIEIRSRNLHQLEE</sequence>
<evidence type="ECO:0000255" key="1">
    <source>
        <dbReference type="HAMAP-Rule" id="MF_00184"/>
    </source>
</evidence>
<evidence type="ECO:0000255" key="2">
    <source>
        <dbReference type="PROSITE-ProRule" id="PRU01228"/>
    </source>
</evidence>
<dbReference type="EC" id="6.1.1.3" evidence="1"/>
<dbReference type="EMBL" id="BX571867">
    <property type="protein sequence ID" value="CAE15043.1"/>
    <property type="molecule type" value="Genomic_DNA"/>
</dbReference>
<dbReference type="RefSeq" id="WP_011146891.1">
    <property type="nucleotide sequence ID" value="NC_005126.1"/>
</dbReference>
<dbReference type="SMR" id="Q7N3P6"/>
<dbReference type="STRING" id="243265.plu2669"/>
<dbReference type="GeneID" id="48848932"/>
<dbReference type="KEGG" id="plu:plu2669"/>
<dbReference type="eggNOG" id="COG0441">
    <property type="taxonomic scope" value="Bacteria"/>
</dbReference>
<dbReference type="HOGENOM" id="CLU_008554_0_1_6"/>
<dbReference type="OrthoDB" id="9802304at2"/>
<dbReference type="Proteomes" id="UP000002514">
    <property type="component" value="Chromosome"/>
</dbReference>
<dbReference type="GO" id="GO:0005829">
    <property type="term" value="C:cytosol"/>
    <property type="evidence" value="ECO:0007669"/>
    <property type="project" value="TreeGrafter"/>
</dbReference>
<dbReference type="GO" id="GO:0005524">
    <property type="term" value="F:ATP binding"/>
    <property type="evidence" value="ECO:0007669"/>
    <property type="project" value="UniProtKB-UniRule"/>
</dbReference>
<dbReference type="GO" id="GO:0046872">
    <property type="term" value="F:metal ion binding"/>
    <property type="evidence" value="ECO:0007669"/>
    <property type="project" value="UniProtKB-KW"/>
</dbReference>
<dbReference type="GO" id="GO:0004829">
    <property type="term" value="F:threonine-tRNA ligase activity"/>
    <property type="evidence" value="ECO:0007669"/>
    <property type="project" value="UniProtKB-UniRule"/>
</dbReference>
<dbReference type="GO" id="GO:0000049">
    <property type="term" value="F:tRNA binding"/>
    <property type="evidence" value="ECO:0007669"/>
    <property type="project" value="UniProtKB-KW"/>
</dbReference>
<dbReference type="GO" id="GO:0006435">
    <property type="term" value="P:threonyl-tRNA aminoacylation"/>
    <property type="evidence" value="ECO:0007669"/>
    <property type="project" value="UniProtKB-UniRule"/>
</dbReference>
<dbReference type="CDD" id="cd01667">
    <property type="entry name" value="TGS_ThrRS"/>
    <property type="match status" value="1"/>
</dbReference>
<dbReference type="CDD" id="cd00860">
    <property type="entry name" value="ThrRS_anticodon"/>
    <property type="match status" value="1"/>
</dbReference>
<dbReference type="CDD" id="cd00771">
    <property type="entry name" value="ThrRS_core"/>
    <property type="match status" value="1"/>
</dbReference>
<dbReference type="FunFam" id="3.10.20.30:FF:000005">
    <property type="entry name" value="Threonine--tRNA ligase"/>
    <property type="match status" value="1"/>
</dbReference>
<dbReference type="FunFam" id="3.30.54.20:FF:000002">
    <property type="entry name" value="Threonine--tRNA ligase"/>
    <property type="match status" value="1"/>
</dbReference>
<dbReference type="FunFam" id="3.30.930.10:FF:000002">
    <property type="entry name" value="Threonine--tRNA ligase"/>
    <property type="match status" value="1"/>
</dbReference>
<dbReference type="FunFam" id="3.40.50.800:FF:000001">
    <property type="entry name" value="Threonine--tRNA ligase"/>
    <property type="match status" value="1"/>
</dbReference>
<dbReference type="FunFam" id="3.30.980.10:FF:000005">
    <property type="entry name" value="Threonyl-tRNA synthetase, mitochondrial"/>
    <property type="match status" value="1"/>
</dbReference>
<dbReference type="Gene3D" id="3.10.20.30">
    <property type="match status" value="1"/>
</dbReference>
<dbReference type="Gene3D" id="3.30.54.20">
    <property type="match status" value="1"/>
</dbReference>
<dbReference type="Gene3D" id="3.40.50.800">
    <property type="entry name" value="Anticodon-binding domain"/>
    <property type="match status" value="1"/>
</dbReference>
<dbReference type="Gene3D" id="3.30.930.10">
    <property type="entry name" value="Bira Bifunctional Protein, Domain 2"/>
    <property type="match status" value="1"/>
</dbReference>
<dbReference type="Gene3D" id="3.30.980.10">
    <property type="entry name" value="Threonyl-trna Synthetase, Chain A, domain 2"/>
    <property type="match status" value="1"/>
</dbReference>
<dbReference type="HAMAP" id="MF_00184">
    <property type="entry name" value="Thr_tRNA_synth"/>
    <property type="match status" value="1"/>
</dbReference>
<dbReference type="InterPro" id="IPR002314">
    <property type="entry name" value="aa-tRNA-synt_IIb"/>
</dbReference>
<dbReference type="InterPro" id="IPR006195">
    <property type="entry name" value="aa-tRNA-synth_II"/>
</dbReference>
<dbReference type="InterPro" id="IPR045864">
    <property type="entry name" value="aa-tRNA-synth_II/BPL/LPL"/>
</dbReference>
<dbReference type="InterPro" id="IPR004154">
    <property type="entry name" value="Anticodon-bd"/>
</dbReference>
<dbReference type="InterPro" id="IPR036621">
    <property type="entry name" value="Anticodon-bd_dom_sf"/>
</dbReference>
<dbReference type="InterPro" id="IPR012675">
    <property type="entry name" value="Beta-grasp_dom_sf"/>
</dbReference>
<dbReference type="InterPro" id="IPR004095">
    <property type="entry name" value="TGS"/>
</dbReference>
<dbReference type="InterPro" id="IPR012676">
    <property type="entry name" value="TGS-like"/>
</dbReference>
<dbReference type="InterPro" id="IPR002320">
    <property type="entry name" value="Thr-tRNA-ligase_IIa"/>
</dbReference>
<dbReference type="InterPro" id="IPR018163">
    <property type="entry name" value="Thr/Ala-tRNA-synth_IIc_edit"/>
</dbReference>
<dbReference type="InterPro" id="IPR047246">
    <property type="entry name" value="ThrRS_anticodon"/>
</dbReference>
<dbReference type="InterPro" id="IPR033728">
    <property type="entry name" value="ThrRS_core"/>
</dbReference>
<dbReference type="InterPro" id="IPR012947">
    <property type="entry name" value="tRNA_SAD"/>
</dbReference>
<dbReference type="NCBIfam" id="TIGR00418">
    <property type="entry name" value="thrS"/>
    <property type="match status" value="1"/>
</dbReference>
<dbReference type="PANTHER" id="PTHR11451:SF44">
    <property type="entry name" value="THREONINE--TRNA LIGASE, CHLOROPLASTIC_MITOCHONDRIAL 2"/>
    <property type="match status" value="1"/>
</dbReference>
<dbReference type="PANTHER" id="PTHR11451">
    <property type="entry name" value="THREONINE-TRNA LIGASE"/>
    <property type="match status" value="1"/>
</dbReference>
<dbReference type="Pfam" id="PF03129">
    <property type="entry name" value="HGTP_anticodon"/>
    <property type="match status" value="1"/>
</dbReference>
<dbReference type="Pfam" id="PF02824">
    <property type="entry name" value="TGS"/>
    <property type="match status" value="1"/>
</dbReference>
<dbReference type="Pfam" id="PF00587">
    <property type="entry name" value="tRNA-synt_2b"/>
    <property type="match status" value="1"/>
</dbReference>
<dbReference type="Pfam" id="PF07973">
    <property type="entry name" value="tRNA_SAD"/>
    <property type="match status" value="1"/>
</dbReference>
<dbReference type="PRINTS" id="PR01047">
    <property type="entry name" value="TRNASYNTHTHR"/>
</dbReference>
<dbReference type="SMART" id="SM00863">
    <property type="entry name" value="tRNA_SAD"/>
    <property type="match status" value="1"/>
</dbReference>
<dbReference type="SUPFAM" id="SSF52954">
    <property type="entry name" value="Class II aaRS ABD-related"/>
    <property type="match status" value="1"/>
</dbReference>
<dbReference type="SUPFAM" id="SSF55681">
    <property type="entry name" value="Class II aaRS and biotin synthetases"/>
    <property type="match status" value="1"/>
</dbReference>
<dbReference type="SUPFAM" id="SSF81271">
    <property type="entry name" value="TGS-like"/>
    <property type="match status" value="1"/>
</dbReference>
<dbReference type="SUPFAM" id="SSF55186">
    <property type="entry name" value="ThrRS/AlaRS common domain"/>
    <property type="match status" value="1"/>
</dbReference>
<dbReference type="PROSITE" id="PS50862">
    <property type="entry name" value="AA_TRNA_LIGASE_II"/>
    <property type="match status" value="1"/>
</dbReference>
<dbReference type="PROSITE" id="PS51880">
    <property type="entry name" value="TGS"/>
    <property type="match status" value="1"/>
</dbReference>
<protein>
    <recommendedName>
        <fullName evidence="1">Threonine--tRNA ligase</fullName>
        <ecNumber evidence="1">6.1.1.3</ecNumber>
    </recommendedName>
    <alternativeName>
        <fullName evidence="1">Threonyl-tRNA synthetase</fullName>
        <shortName evidence="1">ThrRS</shortName>
    </alternativeName>
</protein>
<proteinExistence type="inferred from homology"/>